<name>CBLBB_XENLA</name>
<gene>
    <name type="primary">cblb-b</name>
</gene>
<protein>
    <recommendedName>
        <fullName>E3 ubiquitin-protein ligase CBL-B-B</fullName>
        <ecNumber evidence="3">2.3.2.27</ecNumber>
    </recommendedName>
    <alternativeName>
        <fullName evidence="7">RING-type E3 ubiquitin transferase CBL-B-B</fullName>
    </alternativeName>
    <alternativeName>
        <fullName>SH3-binding protein CBL-B-B</fullName>
    </alternativeName>
    <alternativeName>
        <fullName>Signal transduction protein CBL-B-B</fullName>
    </alternativeName>
</protein>
<sequence length="764" mass="86210">MASSSSSSSNSSTSSSALSGRLPGARSANPRKARILGLFDAIQDAVGPPKQAAADRRTVEKTWKLMDKVVRLCQNPKLQLKNSPPYILDILPDTYQHLRLILSKYDDNQKLAQLSENEYFKIYIDSLMKKSKRAIRLFKEGKERMYEEQSQERRNLTKLSLIFSHMLAEIKAIFPSGQFQGDTFRITKADAAEFWRKFFGERTIVPWKIFRQCLHEVQQISSGLEAMALKSTIDLTCNDYISVFEFDIFARLFQPWSSILRNWNFLAVTHPGYMAFLTYDEVKARLQKYSLKHGSYIFRLSCTRLGQWAIGYVTAGGNILQTIPHNKPLFQALIDGSREGFYLYPDGRSYNPDLTDLCEPTPHDHIKVTQEQYELYCEMGSTFQLCKICAENDKDVKIEPCGHLMCTSCLTSWQESDGQGCPFCRCEIKGTEPIIVDPFDPRDENRCCSFNDSLCTPMFDFDDDDLREECLIMNRLASLRKMNERQNSPVTSPGSSPLLQRRKTPPDPVQIPHLNLPPVPPRLDLIQRGLARSPCASPTGSPKSSPCMARKQDKPLPAPPPPLREPPPPPERPPPIPPDSRTCRHLHHAENVPCRDQSTPNEAWCTRDLSGGNQPSVCRVTHDGSPKLGVSSSVLNGRHSRVSTEAGFMRHKHHKRRESPLETHRVYNGLSGNEEYDVPPRLSPPPPTITIHPTVICPLLANSASDKVRNSAEEDDSEYKIPSSHPVSSRLPLHCHSIKHFPRLCENGQCLSNGAHNGISEIKN</sequence>
<organism>
    <name type="scientific">Xenopus laevis</name>
    <name type="common">African clawed frog</name>
    <dbReference type="NCBI Taxonomy" id="8355"/>
    <lineage>
        <taxon>Eukaryota</taxon>
        <taxon>Metazoa</taxon>
        <taxon>Chordata</taxon>
        <taxon>Craniata</taxon>
        <taxon>Vertebrata</taxon>
        <taxon>Euteleostomi</taxon>
        <taxon>Amphibia</taxon>
        <taxon>Batrachia</taxon>
        <taxon>Anura</taxon>
        <taxon>Pipoidea</taxon>
        <taxon>Pipidae</taxon>
        <taxon>Xenopodinae</taxon>
        <taxon>Xenopus</taxon>
        <taxon>Xenopus</taxon>
    </lineage>
</organism>
<reference key="1">
    <citation type="submission" date="2004-05" db="EMBL/GenBank/DDBJ databases">
        <authorList>
            <consortium name="NIH - Xenopus Gene Collection (XGC) project"/>
        </authorList>
    </citation>
    <scope>NUCLEOTIDE SEQUENCE [LARGE SCALE MRNA]</scope>
    <source>
        <tissue>Oocyte</tissue>
    </source>
</reference>
<accession>Q6NRE7</accession>
<feature type="chain" id="PRO_0000055864" description="E3 ubiquitin-protein ligase CBL-B-B">
    <location>
        <begin position="1"/>
        <end position="764"/>
    </location>
</feature>
<feature type="domain" description="Cbl-PTB" evidence="5">
    <location>
        <begin position="48"/>
        <end position="356"/>
    </location>
</feature>
<feature type="zinc finger region" description="RING-type" evidence="4">
    <location>
        <begin position="386"/>
        <end position="425"/>
    </location>
</feature>
<feature type="region of interest" description="Disordered" evidence="6">
    <location>
        <begin position="1"/>
        <end position="27"/>
    </location>
</feature>
<feature type="region of interest" description="4H">
    <location>
        <begin position="48"/>
        <end position="180"/>
    </location>
</feature>
<feature type="region of interest" description="EF-hand-like">
    <location>
        <begin position="181"/>
        <end position="253"/>
    </location>
</feature>
<feature type="region of interest" description="SH2-like">
    <location>
        <begin position="254"/>
        <end position="356"/>
    </location>
</feature>
<feature type="region of interest" description="Linker">
    <location>
        <begin position="357"/>
        <end position="385"/>
    </location>
</feature>
<feature type="region of interest" description="Disordered" evidence="6">
    <location>
        <begin position="482"/>
        <end position="583"/>
    </location>
</feature>
<feature type="region of interest" description="Disordered" evidence="6">
    <location>
        <begin position="707"/>
        <end position="726"/>
    </location>
</feature>
<feature type="compositionally biased region" description="Low complexity" evidence="6">
    <location>
        <begin position="1"/>
        <end position="19"/>
    </location>
</feature>
<feature type="compositionally biased region" description="Polar residues" evidence="6">
    <location>
        <begin position="485"/>
        <end position="498"/>
    </location>
</feature>
<feature type="compositionally biased region" description="Pro residues" evidence="6">
    <location>
        <begin position="556"/>
        <end position="578"/>
    </location>
</feature>
<feature type="binding site" evidence="2">
    <location>
        <position position="234"/>
    </location>
    <ligand>
        <name>Ca(2+)</name>
        <dbReference type="ChEBI" id="CHEBI:29108"/>
    </ligand>
</feature>
<feature type="binding site" evidence="2">
    <location>
        <position position="236"/>
    </location>
    <ligand>
        <name>Ca(2+)</name>
        <dbReference type="ChEBI" id="CHEBI:29108"/>
    </ligand>
</feature>
<feature type="binding site" evidence="2">
    <location>
        <position position="238"/>
    </location>
    <ligand>
        <name>Ca(2+)</name>
        <dbReference type="ChEBI" id="CHEBI:29108"/>
    </ligand>
</feature>
<feature type="binding site" evidence="2">
    <location>
        <position position="240"/>
    </location>
    <ligand>
        <name>Ca(2+)</name>
        <dbReference type="ChEBI" id="CHEBI:29108"/>
    </ligand>
</feature>
<feature type="binding site" evidence="2">
    <location>
        <position position="245"/>
    </location>
    <ligand>
        <name>Ca(2+)</name>
        <dbReference type="ChEBI" id="CHEBI:29108"/>
    </ligand>
</feature>
<feature type="binding site" evidence="1">
    <location>
        <position position="299"/>
    </location>
    <ligand>
        <name>4-O-phospho-L-tyrosine</name>
        <dbReference type="ChEBI" id="CHEBI:62338"/>
    </ligand>
</feature>
<dbReference type="EC" id="2.3.2.27" evidence="3"/>
<dbReference type="EMBL" id="BC070806">
    <property type="protein sequence ID" value="AAH70806.1"/>
    <property type="molecule type" value="mRNA"/>
</dbReference>
<dbReference type="RefSeq" id="NP_001084790.1">
    <property type="nucleotide sequence ID" value="NM_001091321.1"/>
</dbReference>
<dbReference type="BMRB" id="Q6NRE7"/>
<dbReference type="SMR" id="Q6NRE7"/>
<dbReference type="GeneID" id="431829"/>
<dbReference type="KEGG" id="xla:431829"/>
<dbReference type="AGR" id="Xenbase:XB-GENE-6251770"/>
<dbReference type="CTD" id="431829"/>
<dbReference type="Xenbase" id="XB-GENE-6251770">
    <property type="gene designation" value="cblb.S"/>
</dbReference>
<dbReference type="OrthoDB" id="7237699at2759"/>
<dbReference type="UniPathway" id="UPA00143"/>
<dbReference type="Proteomes" id="UP000186698">
    <property type="component" value="Chromosome 2S"/>
</dbReference>
<dbReference type="Bgee" id="431829">
    <property type="expression patterns" value="Expressed in spleen and 19 other cell types or tissues"/>
</dbReference>
<dbReference type="GO" id="GO:0005737">
    <property type="term" value="C:cytoplasm"/>
    <property type="evidence" value="ECO:0007669"/>
    <property type="project" value="UniProtKB-SubCell"/>
</dbReference>
<dbReference type="GO" id="GO:0045121">
    <property type="term" value="C:membrane raft"/>
    <property type="evidence" value="ECO:0000318"/>
    <property type="project" value="GO_Central"/>
</dbReference>
<dbReference type="GO" id="GO:0005886">
    <property type="term" value="C:plasma membrane"/>
    <property type="evidence" value="ECO:0000318"/>
    <property type="project" value="GO_Central"/>
</dbReference>
<dbReference type="GO" id="GO:0005509">
    <property type="term" value="F:calcium ion binding"/>
    <property type="evidence" value="ECO:0007669"/>
    <property type="project" value="InterPro"/>
</dbReference>
<dbReference type="GO" id="GO:0001784">
    <property type="term" value="F:phosphotyrosine residue binding"/>
    <property type="evidence" value="ECO:0007669"/>
    <property type="project" value="InterPro"/>
</dbReference>
<dbReference type="GO" id="GO:0030971">
    <property type="term" value="F:receptor tyrosine kinase binding"/>
    <property type="evidence" value="ECO:0000318"/>
    <property type="project" value="GO_Central"/>
</dbReference>
<dbReference type="GO" id="GO:0017124">
    <property type="term" value="F:SH3 domain binding"/>
    <property type="evidence" value="ECO:0007669"/>
    <property type="project" value="TreeGrafter"/>
</dbReference>
<dbReference type="GO" id="GO:0061630">
    <property type="term" value="F:ubiquitin protein ligase activity"/>
    <property type="evidence" value="ECO:0000318"/>
    <property type="project" value="GO_Central"/>
</dbReference>
<dbReference type="GO" id="GO:0008270">
    <property type="term" value="F:zinc ion binding"/>
    <property type="evidence" value="ECO:0007669"/>
    <property type="project" value="UniProtKB-KW"/>
</dbReference>
<dbReference type="GO" id="GO:0007166">
    <property type="term" value="P:cell surface receptor signaling pathway"/>
    <property type="evidence" value="ECO:0007669"/>
    <property type="project" value="InterPro"/>
</dbReference>
<dbReference type="GO" id="GO:0002376">
    <property type="term" value="P:immune system process"/>
    <property type="evidence" value="ECO:0007669"/>
    <property type="project" value="UniProtKB-KW"/>
</dbReference>
<dbReference type="GO" id="GO:0042059">
    <property type="term" value="P:negative regulation of epidermal growth factor receptor signaling pathway"/>
    <property type="evidence" value="ECO:0000318"/>
    <property type="project" value="GO_Central"/>
</dbReference>
<dbReference type="GO" id="GO:0016567">
    <property type="term" value="P:protein ubiquitination"/>
    <property type="evidence" value="ECO:0007669"/>
    <property type="project" value="UniProtKB-UniPathway"/>
</dbReference>
<dbReference type="GO" id="GO:2000583">
    <property type="term" value="P:regulation of platelet-derived growth factor receptor-alpha signaling pathway"/>
    <property type="evidence" value="ECO:0000250"/>
    <property type="project" value="UniProtKB"/>
</dbReference>
<dbReference type="GO" id="GO:0007165">
    <property type="term" value="P:signal transduction"/>
    <property type="evidence" value="ECO:0000318"/>
    <property type="project" value="GO_Central"/>
</dbReference>
<dbReference type="CDD" id="cd16708">
    <property type="entry name" value="RING-HC_Cbl"/>
    <property type="match status" value="1"/>
</dbReference>
<dbReference type="CDD" id="cd09920">
    <property type="entry name" value="SH2_Cbl-b_TKB"/>
    <property type="match status" value="1"/>
</dbReference>
<dbReference type="FunFam" id="1.10.238.10:FF:000022">
    <property type="entry name" value="E3 ubiquitin-protein ligase CBL"/>
    <property type="match status" value="1"/>
</dbReference>
<dbReference type="FunFam" id="1.20.930.20:FF:000001">
    <property type="entry name" value="E3 ubiquitin-protein ligase CBL"/>
    <property type="match status" value="1"/>
</dbReference>
<dbReference type="FunFam" id="3.30.40.10:FF:000015">
    <property type="entry name" value="E3 ubiquitin-protein ligase CBL"/>
    <property type="match status" value="1"/>
</dbReference>
<dbReference type="FunFam" id="3.30.505.10:FF:000154">
    <property type="entry name" value="E3 ubiquitin-protein ligase CBL"/>
    <property type="match status" value="1"/>
</dbReference>
<dbReference type="Gene3D" id="1.20.930.20">
    <property type="entry name" value="Adaptor protein Cbl, N-terminal domain"/>
    <property type="match status" value="1"/>
</dbReference>
<dbReference type="Gene3D" id="1.10.238.10">
    <property type="entry name" value="EF-hand"/>
    <property type="match status" value="1"/>
</dbReference>
<dbReference type="Gene3D" id="3.30.505.10">
    <property type="entry name" value="SH2 domain"/>
    <property type="match status" value="1"/>
</dbReference>
<dbReference type="Gene3D" id="3.30.40.10">
    <property type="entry name" value="Zinc/RING finger domain, C3HC4 (zinc finger)"/>
    <property type="match status" value="1"/>
</dbReference>
<dbReference type="InterPro" id="IPR024162">
    <property type="entry name" value="Adaptor_Cbl"/>
</dbReference>
<dbReference type="InterPro" id="IPR014741">
    <property type="entry name" value="Adaptor_Cbl_EF_hand-like"/>
</dbReference>
<dbReference type="InterPro" id="IPR036537">
    <property type="entry name" value="Adaptor_Cbl_N_dom_sf"/>
</dbReference>
<dbReference type="InterPro" id="IPR003153">
    <property type="entry name" value="Adaptor_Cbl_N_hlx"/>
</dbReference>
<dbReference type="InterPro" id="IPR014742">
    <property type="entry name" value="Adaptor_Cbl_SH2-like"/>
</dbReference>
<dbReference type="InterPro" id="IPR024159">
    <property type="entry name" value="Cbl_PTB"/>
</dbReference>
<dbReference type="InterPro" id="IPR011992">
    <property type="entry name" value="EF-hand-dom_pair"/>
</dbReference>
<dbReference type="InterPro" id="IPR036860">
    <property type="entry name" value="SH2_dom_sf"/>
</dbReference>
<dbReference type="InterPro" id="IPR018957">
    <property type="entry name" value="Znf_C3HC4_RING-type"/>
</dbReference>
<dbReference type="InterPro" id="IPR001841">
    <property type="entry name" value="Znf_RING"/>
</dbReference>
<dbReference type="InterPro" id="IPR013083">
    <property type="entry name" value="Znf_RING/FYVE/PHD"/>
</dbReference>
<dbReference type="InterPro" id="IPR017907">
    <property type="entry name" value="Znf_RING_CS"/>
</dbReference>
<dbReference type="PANTHER" id="PTHR23007">
    <property type="entry name" value="CBL"/>
    <property type="match status" value="1"/>
</dbReference>
<dbReference type="PANTHER" id="PTHR23007:SF3">
    <property type="entry name" value="E3 UBIQUITIN-PROTEIN LIGASE CBL-B"/>
    <property type="match status" value="1"/>
</dbReference>
<dbReference type="Pfam" id="PF02262">
    <property type="entry name" value="Cbl_N"/>
    <property type="match status" value="1"/>
</dbReference>
<dbReference type="Pfam" id="PF02761">
    <property type="entry name" value="Cbl_N2"/>
    <property type="match status" value="1"/>
</dbReference>
<dbReference type="Pfam" id="PF02762">
    <property type="entry name" value="Cbl_N3"/>
    <property type="match status" value="1"/>
</dbReference>
<dbReference type="Pfam" id="PF00097">
    <property type="entry name" value="zf-C3HC4"/>
    <property type="match status" value="1"/>
</dbReference>
<dbReference type="SMART" id="SM00184">
    <property type="entry name" value="RING"/>
    <property type="match status" value="1"/>
</dbReference>
<dbReference type="SUPFAM" id="SSF47473">
    <property type="entry name" value="EF-hand"/>
    <property type="match status" value="1"/>
</dbReference>
<dbReference type="SUPFAM" id="SSF47668">
    <property type="entry name" value="N-terminal domain of cbl (N-cbl)"/>
    <property type="match status" value="1"/>
</dbReference>
<dbReference type="SUPFAM" id="SSF57850">
    <property type="entry name" value="RING/U-box"/>
    <property type="match status" value="1"/>
</dbReference>
<dbReference type="SUPFAM" id="SSF55550">
    <property type="entry name" value="SH2 domain"/>
    <property type="match status" value="1"/>
</dbReference>
<dbReference type="PROSITE" id="PS51506">
    <property type="entry name" value="CBL_PTB"/>
    <property type="match status" value="1"/>
</dbReference>
<dbReference type="PROSITE" id="PS00518">
    <property type="entry name" value="ZF_RING_1"/>
    <property type="match status" value="1"/>
</dbReference>
<dbReference type="PROSITE" id="PS50089">
    <property type="entry name" value="ZF_RING_2"/>
    <property type="match status" value="1"/>
</dbReference>
<keyword id="KW-0106">Calcium</keyword>
<keyword id="KW-0963">Cytoplasm</keyword>
<keyword id="KW-0391">Immunity</keyword>
<keyword id="KW-0479">Metal-binding</keyword>
<keyword id="KW-1185">Reference proteome</keyword>
<keyword id="KW-0677">Repeat</keyword>
<keyword id="KW-0808">Transferase</keyword>
<keyword id="KW-0833">Ubl conjugation pathway</keyword>
<keyword id="KW-0862">Zinc</keyword>
<keyword id="KW-0863">Zinc-finger</keyword>
<evidence type="ECO:0000250" key="1"/>
<evidence type="ECO:0000250" key="2">
    <source>
        <dbReference type="UniProtKB" id="P22681"/>
    </source>
</evidence>
<evidence type="ECO:0000250" key="3">
    <source>
        <dbReference type="UniProtKB" id="Q13191"/>
    </source>
</evidence>
<evidence type="ECO:0000255" key="4">
    <source>
        <dbReference type="PROSITE-ProRule" id="PRU00175"/>
    </source>
</evidence>
<evidence type="ECO:0000255" key="5">
    <source>
        <dbReference type="PROSITE-ProRule" id="PRU00839"/>
    </source>
</evidence>
<evidence type="ECO:0000256" key="6">
    <source>
        <dbReference type="SAM" id="MobiDB-lite"/>
    </source>
</evidence>
<evidence type="ECO:0000305" key="7"/>
<proteinExistence type="evidence at transcript level"/>
<comment type="function">
    <text evidence="3">E3 ubiquitin-protein ligase which accepts ubiquitin from specific E2 ubiquitin-conjugating enzymes, and transfers it to substrates, generally promoting their degradation by the proteasome.</text>
</comment>
<comment type="catalytic activity">
    <reaction evidence="3">
        <text>S-ubiquitinyl-[E2 ubiquitin-conjugating enzyme]-L-cysteine + [acceptor protein]-L-lysine = [E2 ubiquitin-conjugating enzyme]-L-cysteine + N(6)-ubiquitinyl-[acceptor protein]-L-lysine.</text>
        <dbReference type="EC" id="2.3.2.27"/>
    </reaction>
</comment>
<comment type="pathway">
    <text>Protein modification; protein ubiquitination.</text>
</comment>
<comment type="subunit">
    <text evidence="3">Interacts with several SH3 domain-containing proteins and with poly-ubiquitinated proteins.</text>
</comment>
<comment type="subcellular location">
    <subcellularLocation>
        <location evidence="3">Cytoplasm</location>
    </subcellularLocation>
</comment>
<comment type="domain">
    <text>The N-terminus is composed of the phosphotyrosine binding (PTB) domain, a short linker region and the RING-type zinc finger. The PTB domain, which is also called TKB (tyrosine kinase binding) domain, is composed of three different subdomains: a four-helix bundle (4H), a calcium-binding EF hand and a divergent SH2 domain.</text>
</comment>
<comment type="domain">
    <text evidence="3">The RING-type zinc finger domain mediates binding to an E2 ubiquitin-conjugating enzyme.</text>
</comment>
<comment type="miscellaneous">
    <text evidence="1">This protein has one functional calcium-binding site.</text>
</comment>